<name>MUTS_PROMA</name>
<dbReference type="EMBL" id="AE017126">
    <property type="protein sequence ID" value="AAQ00849.1"/>
    <property type="molecule type" value="Genomic_DNA"/>
</dbReference>
<dbReference type="RefSeq" id="NP_876196.1">
    <property type="nucleotide sequence ID" value="NC_005042.1"/>
</dbReference>
<dbReference type="RefSeq" id="WP_011125954.1">
    <property type="nucleotide sequence ID" value="NC_005042.1"/>
</dbReference>
<dbReference type="SMR" id="Q7V9M5"/>
<dbReference type="STRING" id="167539.Pro_1805"/>
<dbReference type="EnsemblBacteria" id="AAQ00849">
    <property type="protein sequence ID" value="AAQ00849"/>
    <property type="gene ID" value="Pro_1805"/>
</dbReference>
<dbReference type="KEGG" id="pma:Pro_1805"/>
<dbReference type="PATRIC" id="fig|167539.5.peg.1907"/>
<dbReference type="eggNOG" id="COG0249">
    <property type="taxonomic scope" value="Bacteria"/>
</dbReference>
<dbReference type="HOGENOM" id="CLU_002472_3_1_3"/>
<dbReference type="OrthoDB" id="9802448at2"/>
<dbReference type="Proteomes" id="UP000001420">
    <property type="component" value="Chromosome"/>
</dbReference>
<dbReference type="GO" id="GO:0005829">
    <property type="term" value="C:cytosol"/>
    <property type="evidence" value="ECO:0007669"/>
    <property type="project" value="TreeGrafter"/>
</dbReference>
<dbReference type="GO" id="GO:0005524">
    <property type="term" value="F:ATP binding"/>
    <property type="evidence" value="ECO:0007669"/>
    <property type="project" value="UniProtKB-UniRule"/>
</dbReference>
<dbReference type="GO" id="GO:0140664">
    <property type="term" value="F:ATP-dependent DNA damage sensor activity"/>
    <property type="evidence" value="ECO:0007669"/>
    <property type="project" value="InterPro"/>
</dbReference>
<dbReference type="GO" id="GO:0003684">
    <property type="term" value="F:damaged DNA binding"/>
    <property type="evidence" value="ECO:0007669"/>
    <property type="project" value="UniProtKB-UniRule"/>
</dbReference>
<dbReference type="GO" id="GO:0030983">
    <property type="term" value="F:mismatched DNA binding"/>
    <property type="evidence" value="ECO:0007669"/>
    <property type="project" value="InterPro"/>
</dbReference>
<dbReference type="GO" id="GO:0006298">
    <property type="term" value="P:mismatch repair"/>
    <property type="evidence" value="ECO:0007669"/>
    <property type="project" value="UniProtKB-UniRule"/>
</dbReference>
<dbReference type="CDD" id="cd03284">
    <property type="entry name" value="ABC_MutS1"/>
    <property type="match status" value="1"/>
</dbReference>
<dbReference type="FunFam" id="3.40.50.300:FF:000870">
    <property type="entry name" value="MutS protein homolog 4"/>
    <property type="match status" value="1"/>
</dbReference>
<dbReference type="Gene3D" id="1.10.1420.10">
    <property type="match status" value="2"/>
</dbReference>
<dbReference type="Gene3D" id="3.40.1170.10">
    <property type="entry name" value="DNA repair protein MutS, domain I"/>
    <property type="match status" value="1"/>
</dbReference>
<dbReference type="Gene3D" id="3.30.420.110">
    <property type="entry name" value="MutS, connector domain"/>
    <property type="match status" value="1"/>
</dbReference>
<dbReference type="Gene3D" id="3.40.50.300">
    <property type="entry name" value="P-loop containing nucleotide triphosphate hydrolases"/>
    <property type="match status" value="1"/>
</dbReference>
<dbReference type="HAMAP" id="MF_00096">
    <property type="entry name" value="MutS"/>
    <property type="match status" value="1"/>
</dbReference>
<dbReference type="InterPro" id="IPR005748">
    <property type="entry name" value="DNA_mismatch_repair_MutS"/>
</dbReference>
<dbReference type="InterPro" id="IPR007695">
    <property type="entry name" value="DNA_mismatch_repair_MutS-lik_N"/>
</dbReference>
<dbReference type="InterPro" id="IPR017261">
    <property type="entry name" value="DNA_mismatch_repair_MutS/MSH"/>
</dbReference>
<dbReference type="InterPro" id="IPR000432">
    <property type="entry name" value="DNA_mismatch_repair_MutS_C"/>
</dbReference>
<dbReference type="InterPro" id="IPR007861">
    <property type="entry name" value="DNA_mismatch_repair_MutS_clamp"/>
</dbReference>
<dbReference type="InterPro" id="IPR007696">
    <property type="entry name" value="DNA_mismatch_repair_MutS_core"/>
</dbReference>
<dbReference type="InterPro" id="IPR016151">
    <property type="entry name" value="DNA_mismatch_repair_MutS_N"/>
</dbReference>
<dbReference type="InterPro" id="IPR036187">
    <property type="entry name" value="DNA_mismatch_repair_MutS_sf"/>
</dbReference>
<dbReference type="InterPro" id="IPR007860">
    <property type="entry name" value="DNA_mmatch_repair_MutS_con_dom"/>
</dbReference>
<dbReference type="InterPro" id="IPR045076">
    <property type="entry name" value="MutS"/>
</dbReference>
<dbReference type="InterPro" id="IPR036678">
    <property type="entry name" value="MutS_con_dom_sf"/>
</dbReference>
<dbReference type="InterPro" id="IPR027417">
    <property type="entry name" value="P-loop_NTPase"/>
</dbReference>
<dbReference type="NCBIfam" id="TIGR01070">
    <property type="entry name" value="mutS1"/>
    <property type="match status" value="1"/>
</dbReference>
<dbReference type="NCBIfam" id="NF003810">
    <property type="entry name" value="PRK05399.1"/>
    <property type="match status" value="1"/>
</dbReference>
<dbReference type="PANTHER" id="PTHR11361:SF34">
    <property type="entry name" value="DNA MISMATCH REPAIR PROTEIN MSH1, MITOCHONDRIAL"/>
    <property type="match status" value="1"/>
</dbReference>
<dbReference type="PANTHER" id="PTHR11361">
    <property type="entry name" value="DNA MISMATCH REPAIR PROTEIN MUTS FAMILY MEMBER"/>
    <property type="match status" value="1"/>
</dbReference>
<dbReference type="Pfam" id="PF01624">
    <property type="entry name" value="MutS_I"/>
    <property type="match status" value="1"/>
</dbReference>
<dbReference type="Pfam" id="PF05188">
    <property type="entry name" value="MutS_II"/>
    <property type="match status" value="1"/>
</dbReference>
<dbReference type="Pfam" id="PF05192">
    <property type="entry name" value="MutS_III"/>
    <property type="match status" value="1"/>
</dbReference>
<dbReference type="Pfam" id="PF05190">
    <property type="entry name" value="MutS_IV"/>
    <property type="match status" value="1"/>
</dbReference>
<dbReference type="Pfam" id="PF00488">
    <property type="entry name" value="MutS_V"/>
    <property type="match status" value="1"/>
</dbReference>
<dbReference type="PIRSF" id="PIRSF037677">
    <property type="entry name" value="DNA_mis_repair_Msh6"/>
    <property type="match status" value="1"/>
</dbReference>
<dbReference type="SMART" id="SM00534">
    <property type="entry name" value="MUTSac"/>
    <property type="match status" value="1"/>
</dbReference>
<dbReference type="SMART" id="SM00533">
    <property type="entry name" value="MUTSd"/>
    <property type="match status" value="1"/>
</dbReference>
<dbReference type="SUPFAM" id="SSF55271">
    <property type="entry name" value="DNA repair protein MutS, domain I"/>
    <property type="match status" value="1"/>
</dbReference>
<dbReference type="SUPFAM" id="SSF53150">
    <property type="entry name" value="DNA repair protein MutS, domain II"/>
    <property type="match status" value="1"/>
</dbReference>
<dbReference type="SUPFAM" id="SSF48334">
    <property type="entry name" value="DNA repair protein MutS, domain III"/>
    <property type="match status" value="1"/>
</dbReference>
<dbReference type="SUPFAM" id="SSF52540">
    <property type="entry name" value="P-loop containing nucleoside triphosphate hydrolases"/>
    <property type="match status" value="1"/>
</dbReference>
<dbReference type="PROSITE" id="PS00486">
    <property type="entry name" value="DNA_MISMATCH_REPAIR_2"/>
    <property type="match status" value="1"/>
</dbReference>
<feature type="chain" id="PRO_0000115118" description="DNA mismatch repair protein MutS">
    <location>
        <begin position="1"/>
        <end position="914"/>
    </location>
</feature>
<feature type="region of interest" description="Disordered" evidence="2">
    <location>
        <begin position="28"/>
        <end position="74"/>
    </location>
</feature>
<feature type="binding site" evidence="1">
    <location>
        <begin position="726"/>
        <end position="733"/>
    </location>
    <ligand>
        <name>ATP</name>
        <dbReference type="ChEBI" id="CHEBI:30616"/>
    </ligand>
</feature>
<sequence length="914" mass="101957">MTAENTPLQGNLFVESEENLLDANSLQNTNSVKDSNLNDEELSKNAELRPRKRKKSVLLQNSVGEQTEDFSNDERPAWSHHSLVEINELTPVLRHYVELKQKHPERILLYRLGDFFECFFEDAIGLSELLELTLTGKEGGKKIGRVPMAGIPHHAAERYCSTLIQKGLSVAICDQLESIQNKEGKLLKRGITRILTPGTVLEEGMLQAKKNNWLAAILIESNSQTNQLKWGLASADISTGEFTVKEGNGIDTLEQDLLNIEASEIICEQLDVDISKKWQSNRIKITQQSKTSFSLQEAKAILKKHYNLKTINGLGLNETELALRAAGGLLYYLKETNPIHNIGVKNKCSKVVLDFPKNNLRGDSLIIDAQTRRNLELTKTQKDGHFQGSLLCAIDRTLTAMGGRCLRRWIENPLINSELILQRQRLITLLVEKRPLRKALRNLLRTMGDIERLSGRASAGQAGARELVAIADCLEKLPKLAANLQNLSINPPKWFSKLENINPELTKLAEEIKDKLIDNPPLSITEGNLINDSVDKILDGLRNQLDDQNEWLSNQEKKERNISGNNNLKLQHHRTFGYFLAVSKSKANTVPDHWIRRQTLANEERFVTPALKERESKIFQLKVKAANREYDLFCALRELVGGYAPIIRETAKAIAGLDVLLGLAELASTNNYCAPNIIDKKSLSNSRSINIKGCRHPVVEQMLVEEKFQANDIELGDGVDLIILTGPNASGKSCYLRQIGLIQILSQIGSWIPADKASISIADRVFTRVGAVDDLAAGQSTFMVEMAETAFILNQATQDSIVLLDEIGRGTSTFDGLSIAWSVSEFLAENIKSRTIFATHYHELNELAKKMGNVANFQVLVHETGEDIHFLHQVIPGGSNRSYGIEAARLAGVPKSVINRARGVLKRLEEKNKG</sequence>
<accession>Q7V9M5</accession>
<evidence type="ECO:0000255" key="1">
    <source>
        <dbReference type="HAMAP-Rule" id="MF_00096"/>
    </source>
</evidence>
<evidence type="ECO:0000256" key="2">
    <source>
        <dbReference type="SAM" id="MobiDB-lite"/>
    </source>
</evidence>
<keyword id="KW-0067">ATP-binding</keyword>
<keyword id="KW-0227">DNA damage</keyword>
<keyword id="KW-0234">DNA repair</keyword>
<keyword id="KW-0238">DNA-binding</keyword>
<keyword id="KW-0547">Nucleotide-binding</keyword>
<keyword id="KW-1185">Reference proteome</keyword>
<comment type="function">
    <text evidence="1">This protein is involved in the repair of mismatches in DNA. It is possible that it carries out the mismatch recognition step. This protein has a weak ATPase activity.</text>
</comment>
<comment type="similarity">
    <text evidence="1">Belongs to the DNA mismatch repair MutS family.</text>
</comment>
<protein>
    <recommendedName>
        <fullName evidence="1">DNA mismatch repair protein MutS</fullName>
    </recommendedName>
</protein>
<organism>
    <name type="scientific">Prochlorococcus marinus (strain SARG / CCMP1375 / SS120)</name>
    <dbReference type="NCBI Taxonomy" id="167539"/>
    <lineage>
        <taxon>Bacteria</taxon>
        <taxon>Bacillati</taxon>
        <taxon>Cyanobacteriota</taxon>
        <taxon>Cyanophyceae</taxon>
        <taxon>Synechococcales</taxon>
        <taxon>Prochlorococcaceae</taxon>
        <taxon>Prochlorococcus</taxon>
    </lineage>
</organism>
<proteinExistence type="inferred from homology"/>
<gene>
    <name evidence="1" type="primary">mutS</name>
    <name type="ordered locus">Pro_1805</name>
</gene>
<reference key="1">
    <citation type="journal article" date="2003" name="Proc. Natl. Acad. Sci. U.S.A.">
        <title>Genome sequence of the cyanobacterium Prochlorococcus marinus SS120, a nearly minimal oxyphototrophic genome.</title>
        <authorList>
            <person name="Dufresne A."/>
            <person name="Salanoubat M."/>
            <person name="Partensky F."/>
            <person name="Artiguenave F."/>
            <person name="Axmann I.M."/>
            <person name="Barbe V."/>
            <person name="Duprat S."/>
            <person name="Galperin M.Y."/>
            <person name="Koonin E.V."/>
            <person name="Le Gall F."/>
            <person name="Makarova K.S."/>
            <person name="Ostrowski M."/>
            <person name="Oztas S."/>
            <person name="Robert C."/>
            <person name="Rogozin I.B."/>
            <person name="Scanlan D.J."/>
            <person name="Tandeau de Marsac N."/>
            <person name="Weissenbach J."/>
            <person name="Wincker P."/>
            <person name="Wolf Y.I."/>
            <person name="Hess W.R."/>
        </authorList>
    </citation>
    <scope>NUCLEOTIDE SEQUENCE [LARGE SCALE GENOMIC DNA]</scope>
    <source>
        <strain>SARG / CCMP1375 / SS120</strain>
    </source>
</reference>